<sequence>MSKFWSSLAKQVDPYIPGEQLNDDTIIKLNTNENPYPPSNQVIQAIDEASKNLRLYPSPTVDELRSEIGEMYGLSQDHIFIGNGSDEVLAFSFMSFFEPGNRIKYPEITYSFYPVYAKLFNISTDVIPLNDDYTIPVEHFYNSEGGVIFPNPNAPTGIFLEIDQIKRILENNPNQVVIIDEAYIDFALESAVTLVEAFPNLLVIQTMSKSRSLAGLRIGFAIGNPELIIGLERIKNSFNSYTVDRLAIAGAIEAIRDKDYFLQTTTKIIESRSYLKEQLETRHFDILPSQANFLLVSHKEVNAEVLYQELKKQGILVRYFQKPGLENFLRISIGTPAQIEKLLKKIDHIIKPSP</sequence>
<feature type="chain" id="PRO_0000153407" description="Histidinol-phosphate aminotransferase 1">
    <location>
        <begin position="1"/>
        <end position="354"/>
    </location>
</feature>
<feature type="modified residue" description="N6-(pyridoxal phosphate)lysine" evidence="1">
    <location>
        <position position="209"/>
    </location>
</feature>
<reference key="1">
    <citation type="journal article" date="2002" name="Nucleic Acids Res.">
        <title>Genome sequence of Oceanobacillus iheyensis isolated from the Iheya Ridge and its unexpected adaptive capabilities to extreme environments.</title>
        <authorList>
            <person name="Takami H."/>
            <person name="Takaki Y."/>
            <person name="Uchiyama I."/>
        </authorList>
    </citation>
    <scope>NUCLEOTIDE SEQUENCE [LARGE SCALE GENOMIC DNA]</scope>
    <source>
        <strain>DSM 14371 / CIP 107618 / JCM 11309 / KCTC 3954 / HTE831</strain>
    </source>
</reference>
<dbReference type="EC" id="2.6.1.9"/>
<dbReference type="EMBL" id="BA000028">
    <property type="protein sequence ID" value="BAC12501.1"/>
    <property type="molecule type" value="Genomic_DNA"/>
</dbReference>
<dbReference type="RefSeq" id="WP_011064948.1">
    <property type="nucleotide sequence ID" value="NC_004193.1"/>
</dbReference>
<dbReference type="SMR" id="Q8ESS3"/>
<dbReference type="STRING" id="221109.gene:10732749"/>
<dbReference type="KEGG" id="oih:OB0545"/>
<dbReference type="eggNOG" id="COG0079">
    <property type="taxonomic scope" value="Bacteria"/>
</dbReference>
<dbReference type="HOGENOM" id="CLU_017584_3_0_9"/>
<dbReference type="OrthoDB" id="9813612at2"/>
<dbReference type="PhylomeDB" id="Q8ESS3"/>
<dbReference type="UniPathway" id="UPA00031">
    <property type="reaction ID" value="UER00012"/>
</dbReference>
<dbReference type="Proteomes" id="UP000000822">
    <property type="component" value="Chromosome"/>
</dbReference>
<dbReference type="GO" id="GO:0004400">
    <property type="term" value="F:histidinol-phosphate transaminase activity"/>
    <property type="evidence" value="ECO:0007669"/>
    <property type="project" value="UniProtKB-UniRule"/>
</dbReference>
<dbReference type="GO" id="GO:0030170">
    <property type="term" value="F:pyridoxal phosphate binding"/>
    <property type="evidence" value="ECO:0007669"/>
    <property type="project" value="InterPro"/>
</dbReference>
<dbReference type="GO" id="GO:0000105">
    <property type="term" value="P:L-histidine biosynthetic process"/>
    <property type="evidence" value="ECO:0007669"/>
    <property type="project" value="UniProtKB-UniRule"/>
</dbReference>
<dbReference type="CDD" id="cd00609">
    <property type="entry name" value="AAT_like"/>
    <property type="match status" value="1"/>
</dbReference>
<dbReference type="Gene3D" id="3.90.1150.10">
    <property type="entry name" value="Aspartate Aminotransferase, domain 1"/>
    <property type="match status" value="1"/>
</dbReference>
<dbReference type="Gene3D" id="3.40.640.10">
    <property type="entry name" value="Type I PLP-dependent aspartate aminotransferase-like (Major domain)"/>
    <property type="match status" value="1"/>
</dbReference>
<dbReference type="HAMAP" id="MF_01023">
    <property type="entry name" value="HisC_aminotrans_2"/>
    <property type="match status" value="1"/>
</dbReference>
<dbReference type="InterPro" id="IPR001917">
    <property type="entry name" value="Aminotrans_II_pyridoxalP_BS"/>
</dbReference>
<dbReference type="InterPro" id="IPR004839">
    <property type="entry name" value="Aminotransferase_I/II_large"/>
</dbReference>
<dbReference type="InterPro" id="IPR005861">
    <property type="entry name" value="HisP_aminotrans"/>
</dbReference>
<dbReference type="InterPro" id="IPR050106">
    <property type="entry name" value="HistidinolP_aminotransfase"/>
</dbReference>
<dbReference type="InterPro" id="IPR015424">
    <property type="entry name" value="PyrdxlP-dep_Trfase"/>
</dbReference>
<dbReference type="InterPro" id="IPR015421">
    <property type="entry name" value="PyrdxlP-dep_Trfase_major"/>
</dbReference>
<dbReference type="InterPro" id="IPR015422">
    <property type="entry name" value="PyrdxlP-dep_Trfase_small"/>
</dbReference>
<dbReference type="NCBIfam" id="TIGR01141">
    <property type="entry name" value="hisC"/>
    <property type="match status" value="1"/>
</dbReference>
<dbReference type="PANTHER" id="PTHR43643:SF3">
    <property type="entry name" value="HISTIDINOL-PHOSPHATE AMINOTRANSFERASE"/>
    <property type="match status" value="1"/>
</dbReference>
<dbReference type="PANTHER" id="PTHR43643">
    <property type="entry name" value="HISTIDINOL-PHOSPHATE AMINOTRANSFERASE 2"/>
    <property type="match status" value="1"/>
</dbReference>
<dbReference type="Pfam" id="PF00155">
    <property type="entry name" value="Aminotran_1_2"/>
    <property type="match status" value="1"/>
</dbReference>
<dbReference type="SUPFAM" id="SSF53383">
    <property type="entry name" value="PLP-dependent transferases"/>
    <property type="match status" value="1"/>
</dbReference>
<dbReference type="PROSITE" id="PS00599">
    <property type="entry name" value="AA_TRANSFER_CLASS_2"/>
    <property type="match status" value="1"/>
</dbReference>
<name>HIS81_OCEIH</name>
<comment type="catalytic activity">
    <reaction>
        <text>L-histidinol phosphate + 2-oxoglutarate = 3-(imidazol-4-yl)-2-oxopropyl phosphate + L-glutamate</text>
        <dbReference type="Rhea" id="RHEA:23744"/>
        <dbReference type="ChEBI" id="CHEBI:16810"/>
        <dbReference type="ChEBI" id="CHEBI:29985"/>
        <dbReference type="ChEBI" id="CHEBI:57766"/>
        <dbReference type="ChEBI" id="CHEBI:57980"/>
        <dbReference type="EC" id="2.6.1.9"/>
    </reaction>
</comment>
<comment type="cofactor">
    <cofactor evidence="1">
        <name>pyridoxal 5'-phosphate</name>
        <dbReference type="ChEBI" id="CHEBI:597326"/>
    </cofactor>
</comment>
<comment type="pathway">
    <text>Amino-acid biosynthesis; L-histidine biosynthesis; L-histidine from 5-phospho-alpha-D-ribose 1-diphosphate: step 7/9.</text>
</comment>
<comment type="subunit">
    <text evidence="1">Homodimer.</text>
</comment>
<comment type="similarity">
    <text evidence="2">Belongs to the class-II pyridoxal-phosphate-dependent aminotransferase family. Histidinol-phosphate aminotransferase subfamily.</text>
</comment>
<keyword id="KW-0028">Amino-acid biosynthesis</keyword>
<keyword id="KW-0032">Aminotransferase</keyword>
<keyword id="KW-0368">Histidine biosynthesis</keyword>
<keyword id="KW-0663">Pyridoxal phosphate</keyword>
<keyword id="KW-1185">Reference proteome</keyword>
<keyword id="KW-0808">Transferase</keyword>
<gene>
    <name type="primary">hisC1</name>
    <name type="ordered locus">OB0545</name>
</gene>
<organism>
    <name type="scientific">Oceanobacillus iheyensis (strain DSM 14371 / CIP 107618 / JCM 11309 / KCTC 3954 / HTE831)</name>
    <dbReference type="NCBI Taxonomy" id="221109"/>
    <lineage>
        <taxon>Bacteria</taxon>
        <taxon>Bacillati</taxon>
        <taxon>Bacillota</taxon>
        <taxon>Bacilli</taxon>
        <taxon>Bacillales</taxon>
        <taxon>Bacillaceae</taxon>
        <taxon>Oceanobacillus</taxon>
    </lineage>
</organism>
<evidence type="ECO:0000250" key="1"/>
<evidence type="ECO:0000305" key="2"/>
<protein>
    <recommendedName>
        <fullName>Histidinol-phosphate aminotransferase 1</fullName>
        <ecNumber>2.6.1.9</ecNumber>
    </recommendedName>
    <alternativeName>
        <fullName>Imidazole acetol-phosphate transaminase 1</fullName>
    </alternativeName>
</protein>
<accession>Q8ESS3</accession>
<proteinExistence type="inferred from homology"/>